<sequence>MSSFDSAEGECNGLNQHYEKKVRPIIDLVDTLRALGVEKDLNLPAIAVIGDQSSGKSSVLEALSGVALPRGIGIVTRCPLILKLKKITRDKNWSGLLTYKDQTEILKEPTGIENAVLKAQIALAGTGEGISHEMITLEIQSCDVPDLTLIDLPGIARVATGNQPEDIEKQIKDLIEKFIKRQETISLVVVPANIDIATTEALKMASTVDPTGQRTLCILTKPDLVDRGMEDTVVRTVNNEVIRLEKGYMIVKCRGQQDINDKLNLVEALEKERRFFDEHPQFSSLLEDGKATIPLLGQRLTEELVEHIAKNVPRLQNQIEMKLQKTFERLKVLGESVPDDDEIELNNFLIKKLRQFMDALEEVKRVEEEPVKSDTRVFSKIRQEFVSWKHILDSKPIKMSTDLQEYVRTHRGKELPGFLNYGTFAGIIRMHVEDLEEPALKLLRNAKDIVHSSVGSIANIHFNGYPNLLLAVKEPIEKCLHEQFQNAEEKIRSQFKLEKTVYCQDDLYTNHLNLLRPKNTVRFGLEASLGNSELRETAFHLTSYLTIACERLANQIPLIVQYHMMNEYNSQLQNAMLGLIGTSDPGMLLCEDSGVARIRKDLKERLERLKDARRALPKVVHSANSW</sequence>
<reference key="1">
    <citation type="submission" date="2004-06" db="EMBL/GenBank/DDBJ databases">
        <authorList>
            <consortium name="NIH - Zebrafish Gene Collection (ZGC) project"/>
        </authorList>
    </citation>
    <scope>NUCLEOTIDE SEQUENCE [LARGE SCALE MRNA]</scope>
</reference>
<reference key="2">
    <citation type="journal article" date="2003" name="BMC Genomics">
        <title>Comparative genomic analysis reveals independent expansion of a lineage-specific gene family in vertebrates: the class II cytokine receptors and their ligands in mammals and fish.</title>
        <authorList>
            <person name="Lutfalla G."/>
            <person name="Roest Crollius H."/>
            <person name="Stange-Thomann N."/>
            <person name="Jaillon O."/>
            <person name="Mogensen K."/>
            <person name="Monneron D."/>
        </authorList>
    </citation>
    <scope>NUCLEOTIDE SEQUENCE [MRNA] OF 29-309</scope>
</reference>
<comment type="subcellular location">
    <subcellularLocation>
        <location evidence="1">Cytoplasm</location>
    </subcellularLocation>
</comment>
<comment type="induction">
    <text>By interferons.</text>
</comment>
<comment type="similarity">
    <text evidence="4">Belongs to the TRAFAC class dynamin-like GTPase superfamily. Dynamin/Fzo/YdjA family.</text>
</comment>
<feature type="chain" id="PRO_0000292869" description="Interferon-induced GTP-binding protein MxC">
    <location>
        <begin position="1"/>
        <end position="626"/>
    </location>
</feature>
<feature type="domain" description="Dynamin-type G" evidence="4">
    <location>
        <begin position="40"/>
        <end position="313"/>
    </location>
</feature>
<feature type="domain" description="GED" evidence="3">
    <location>
        <begin position="534"/>
        <end position="624"/>
    </location>
</feature>
<feature type="region of interest" description="G1 motif" evidence="4">
    <location>
        <begin position="50"/>
        <end position="57"/>
    </location>
</feature>
<feature type="region of interest" description="G2 motif" evidence="4">
    <location>
        <begin position="75"/>
        <end position="77"/>
    </location>
</feature>
<feature type="region of interest" description="G3 motif" evidence="4">
    <location>
        <begin position="151"/>
        <end position="154"/>
    </location>
</feature>
<feature type="region of interest" description="G4 motif" evidence="4">
    <location>
        <begin position="220"/>
        <end position="223"/>
    </location>
</feature>
<feature type="region of interest" description="G5 motif" evidence="4">
    <location>
        <begin position="252"/>
        <end position="255"/>
    </location>
</feature>
<feature type="binding site" evidence="2">
    <location>
        <begin position="50"/>
        <end position="57"/>
    </location>
    <ligand>
        <name>GTP</name>
        <dbReference type="ChEBI" id="CHEBI:37565"/>
    </ligand>
</feature>
<feature type="binding site" evidence="2">
    <location>
        <begin position="151"/>
        <end position="155"/>
    </location>
    <ligand>
        <name>GTP</name>
        <dbReference type="ChEBI" id="CHEBI:37565"/>
    </ligand>
</feature>
<feature type="binding site" evidence="2">
    <location>
        <begin position="220"/>
        <end position="223"/>
    </location>
    <ligand>
        <name>GTP</name>
        <dbReference type="ChEBI" id="CHEBI:37565"/>
    </ligand>
</feature>
<feature type="sequence conflict" description="In Ref. 2; CAD67757." evidence="5" ref="2">
    <original>E</original>
    <variation>G</variation>
    <location>
        <position position="108"/>
    </location>
</feature>
<feature type="sequence conflict" description="In Ref. 2; CAD67757." evidence="5" ref="2">
    <original>L</original>
    <variation>F</variation>
    <location>
        <position position="286"/>
    </location>
</feature>
<feature type="sequence conflict" description="In Ref. 2; CAD67757." evidence="5" ref="2">
    <original>EELV</original>
    <variation>KKLG</variation>
    <location>
        <begin position="302"/>
        <end position="305"/>
    </location>
</feature>
<gene>
    <name type="primary">mxc</name>
</gene>
<dbReference type="EMBL" id="BC074099">
    <property type="protein sequence ID" value="AAH74099.1"/>
    <property type="molecule type" value="mRNA"/>
</dbReference>
<dbReference type="EMBL" id="AJ544825">
    <property type="protein sequence ID" value="CAD67757.1"/>
    <property type="molecule type" value="mRNA"/>
</dbReference>
<dbReference type="RefSeq" id="NP_001007285.1">
    <property type="nucleotide sequence ID" value="NM_001007284.2"/>
</dbReference>
<dbReference type="RefSeq" id="XP_005167728.1">
    <property type="nucleotide sequence ID" value="XM_005167671.5"/>
</dbReference>
<dbReference type="SMR" id="Q6DKF0"/>
<dbReference type="FunCoup" id="Q6DKF0">
    <property type="interactions" value="4"/>
</dbReference>
<dbReference type="STRING" id="7955.ENSDARP00000007267"/>
<dbReference type="PaxDb" id="7955-ENSDARP00000007267"/>
<dbReference type="Ensembl" id="ENSDART00000012694">
    <property type="protein sequence ID" value="ENSDARP00000007267"/>
    <property type="gene ID" value="ENSDARG00000024789"/>
</dbReference>
<dbReference type="GeneID" id="360145"/>
<dbReference type="KEGG" id="dre:360145"/>
<dbReference type="AGR" id="ZFIN:ZDB-GENE-030721-7"/>
<dbReference type="CTD" id="360145"/>
<dbReference type="ZFIN" id="ZDB-GENE-030721-7">
    <property type="gene designation" value="mxc"/>
</dbReference>
<dbReference type="eggNOG" id="KOG0446">
    <property type="taxonomic scope" value="Eukaryota"/>
</dbReference>
<dbReference type="InParanoid" id="Q6DKF0"/>
<dbReference type="OMA" id="XALLEEG"/>
<dbReference type="OrthoDB" id="5061070at2759"/>
<dbReference type="PhylomeDB" id="Q6DKF0"/>
<dbReference type="TreeFam" id="TF331484"/>
<dbReference type="PRO" id="PR:Q6DKF0"/>
<dbReference type="Proteomes" id="UP000000437">
    <property type="component" value="Chromosome 9"/>
</dbReference>
<dbReference type="Bgee" id="ENSDARG00000024789">
    <property type="expression patterns" value="Expressed in pharyngeal gill and 16 other cell types or tissues"/>
</dbReference>
<dbReference type="ExpressionAtlas" id="Q6DKF0">
    <property type="expression patterns" value="differential"/>
</dbReference>
<dbReference type="GO" id="GO:0005737">
    <property type="term" value="C:cytoplasm"/>
    <property type="evidence" value="ECO:0000318"/>
    <property type="project" value="GO_Central"/>
</dbReference>
<dbReference type="GO" id="GO:0005874">
    <property type="term" value="C:microtubule"/>
    <property type="evidence" value="ECO:0000318"/>
    <property type="project" value="GO_Central"/>
</dbReference>
<dbReference type="GO" id="GO:0005634">
    <property type="term" value="C:nucleus"/>
    <property type="evidence" value="ECO:0000318"/>
    <property type="project" value="GO_Central"/>
</dbReference>
<dbReference type="GO" id="GO:0005886">
    <property type="term" value="C:plasma membrane"/>
    <property type="evidence" value="ECO:0000318"/>
    <property type="project" value="GO_Central"/>
</dbReference>
<dbReference type="GO" id="GO:0098793">
    <property type="term" value="C:presynapse"/>
    <property type="evidence" value="ECO:0007669"/>
    <property type="project" value="GOC"/>
</dbReference>
<dbReference type="GO" id="GO:0045202">
    <property type="term" value="C:synapse"/>
    <property type="evidence" value="ECO:0000318"/>
    <property type="project" value="GO_Central"/>
</dbReference>
<dbReference type="GO" id="GO:0005525">
    <property type="term" value="F:GTP binding"/>
    <property type="evidence" value="ECO:0007669"/>
    <property type="project" value="UniProtKB-KW"/>
</dbReference>
<dbReference type="GO" id="GO:0003924">
    <property type="term" value="F:GTPase activity"/>
    <property type="evidence" value="ECO:0000318"/>
    <property type="project" value="GO_Central"/>
</dbReference>
<dbReference type="GO" id="GO:0008017">
    <property type="term" value="F:microtubule binding"/>
    <property type="evidence" value="ECO:0000318"/>
    <property type="project" value="GO_Central"/>
</dbReference>
<dbReference type="GO" id="GO:0051607">
    <property type="term" value="P:defense response to virus"/>
    <property type="evidence" value="ECO:0000318"/>
    <property type="project" value="GO_Central"/>
</dbReference>
<dbReference type="GO" id="GO:0031623">
    <property type="term" value="P:receptor internalization"/>
    <property type="evidence" value="ECO:0000318"/>
    <property type="project" value="GO_Central"/>
</dbReference>
<dbReference type="GO" id="GO:0043330">
    <property type="term" value="P:response to exogenous dsRNA"/>
    <property type="evidence" value="ECO:0000314"/>
    <property type="project" value="ZFIN"/>
</dbReference>
<dbReference type="GO" id="GO:0009615">
    <property type="term" value="P:response to virus"/>
    <property type="evidence" value="ECO:0000314"/>
    <property type="project" value="ZFIN"/>
</dbReference>
<dbReference type="GO" id="GO:0016185">
    <property type="term" value="P:synaptic vesicle budding from presynaptic endocytic zone membrane"/>
    <property type="evidence" value="ECO:0000318"/>
    <property type="project" value="GO_Central"/>
</dbReference>
<dbReference type="CDD" id="cd08771">
    <property type="entry name" value="DLP_1"/>
    <property type="match status" value="1"/>
</dbReference>
<dbReference type="FunFam" id="1.20.120.1240:FF:000007">
    <property type="entry name" value="Interferon-induced GTP-binding protein Mx1"/>
    <property type="match status" value="1"/>
</dbReference>
<dbReference type="FunFam" id="3.40.50.300:FF:000621">
    <property type="entry name" value="Interferon-induced GTP-binding protein Mx1"/>
    <property type="match status" value="1"/>
</dbReference>
<dbReference type="Gene3D" id="1.20.120.1240">
    <property type="entry name" value="Dynamin, middle domain"/>
    <property type="match status" value="1"/>
</dbReference>
<dbReference type="Gene3D" id="3.40.50.300">
    <property type="entry name" value="P-loop containing nucleotide triphosphate hydrolases"/>
    <property type="match status" value="1"/>
</dbReference>
<dbReference type="InterPro" id="IPR022812">
    <property type="entry name" value="Dynamin"/>
</dbReference>
<dbReference type="InterPro" id="IPR001401">
    <property type="entry name" value="Dynamin_GTPase"/>
</dbReference>
<dbReference type="InterPro" id="IPR045063">
    <property type="entry name" value="Dynamin_N"/>
</dbReference>
<dbReference type="InterPro" id="IPR000375">
    <property type="entry name" value="Dynamin_stalk"/>
</dbReference>
<dbReference type="InterPro" id="IPR030381">
    <property type="entry name" value="G_DYNAMIN_dom"/>
</dbReference>
<dbReference type="InterPro" id="IPR003130">
    <property type="entry name" value="GED"/>
</dbReference>
<dbReference type="InterPro" id="IPR020850">
    <property type="entry name" value="GED_dom"/>
</dbReference>
<dbReference type="InterPro" id="IPR027417">
    <property type="entry name" value="P-loop_NTPase"/>
</dbReference>
<dbReference type="PANTHER" id="PTHR11566">
    <property type="entry name" value="DYNAMIN"/>
    <property type="match status" value="1"/>
</dbReference>
<dbReference type="PANTHER" id="PTHR11566:SF199">
    <property type="entry name" value="INTERFERON-INDUCED GTP-BINDING PROTEIN MXC-RELATED"/>
    <property type="match status" value="1"/>
</dbReference>
<dbReference type="Pfam" id="PF01031">
    <property type="entry name" value="Dynamin_M"/>
    <property type="match status" value="1"/>
</dbReference>
<dbReference type="Pfam" id="PF00350">
    <property type="entry name" value="Dynamin_N"/>
    <property type="match status" value="1"/>
</dbReference>
<dbReference type="Pfam" id="PF02212">
    <property type="entry name" value="GED"/>
    <property type="match status" value="1"/>
</dbReference>
<dbReference type="PRINTS" id="PR00195">
    <property type="entry name" value="DYNAMIN"/>
</dbReference>
<dbReference type="SMART" id="SM00053">
    <property type="entry name" value="DYNc"/>
    <property type="match status" value="1"/>
</dbReference>
<dbReference type="SMART" id="SM00302">
    <property type="entry name" value="GED"/>
    <property type="match status" value="1"/>
</dbReference>
<dbReference type="SUPFAM" id="SSF52540">
    <property type="entry name" value="P-loop containing nucleoside triphosphate hydrolases"/>
    <property type="match status" value="1"/>
</dbReference>
<dbReference type="PROSITE" id="PS51718">
    <property type="entry name" value="G_DYNAMIN_2"/>
    <property type="match status" value="1"/>
</dbReference>
<dbReference type="PROSITE" id="PS51388">
    <property type="entry name" value="GED"/>
    <property type="match status" value="1"/>
</dbReference>
<organism>
    <name type="scientific">Danio rerio</name>
    <name type="common">Zebrafish</name>
    <name type="synonym">Brachydanio rerio</name>
    <dbReference type="NCBI Taxonomy" id="7955"/>
    <lineage>
        <taxon>Eukaryota</taxon>
        <taxon>Metazoa</taxon>
        <taxon>Chordata</taxon>
        <taxon>Craniata</taxon>
        <taxon>Vertebrata</taxon>
        <taxon>Euteleostomi</taxon>
        <taxon>Actinopterygii</taxon>
        <taxon>Neopterygii</taxon>
        <taxon>Teleostei</taxon>
        <taxon>Ostariophysi</taxon>
        <taxon>Cypriniformes</taxon>
        <taxon>Danionidae</taxon>
        <taxon>Danioninae</taxon>
        <taxon>Danio</taxon>
    </lineage>
</organism>
<protein>
    <recommendedName>
        <fullName>Interferon-induced GTP-binding protein MxC</fullName>
    </recommendedName>
    <alternativeName>
        <fullName>IFN-inducible antiviral protein MxC</fullName>
    </alternativeName>
    <alternativeName>
        <fullName>Interferon-inducible MxC protein</fullName>
    </alternativeName>
</protein>
<evidence type="ECO:0000250" key="1"/>
<evidence type="ECO:0000255" key="2"/>
<evidence type="ECO:0000255" key="3">
    <source>
        <dbReference type="PROSITE-ProRule" id="PRU00720"/>
    </source>
</evidence>
<evidence type="ECO:0000255" key="4">
    <source>
        <dbReference type="PROSITE-ProRule" id="PRU01055"/>
    </source>
</evidence>
<evidence type="ECO:0000305" key="5"/>
<accession>Q6DKF0</accession>
<accession>Q800G7</accession>
<proteinExistence type="evidence at transcript level"/>
<name>MXC_DANRE</name>
<keyword id="KW-0963">Cytoplasm</keyword>
<keyword id="KW-0342">GTP-binding</keyword>
<keyword id="KW-0547">Nucleotide-binding</keyword>
<keyword id="KW-1185">Reference proteome</keyword>